<gene>
    <name type="primary">irs4</name>
    <name type="ORF">NFIA_075220</name>
</gene>
<feature type="chain" id="PRO_0000308761" description="Increased rDNA silencing protein 4">
    <location>
        <begin position="1"/>
        <end position="513"/>
    </location>
</feature>
<feature type="domain" description="EH" evidence="2">
    <location>
        <begin position="412"/>
        <end position="502"/>
    </location>
</feature>
<feature type="region of interest" description="Disordered" evidence="3">
    <location>
        <begin position="1"/>
        <end position="383"/>
    </location>
</feature>
<feature type="compositionally biased region" description="Basic and acidic residues" evidence="3">
    <location>
        <begin position="1"/>
        <end position="23"/>
    </location>
</feature>
<feature type="compositionally biased region" description="Low complexity" evidence="3">
    <location>
        <begin position="67"/>
        <end position="77"/>
    </location>
</feature>
<feature type="compositionally biased region" description="Polar residues" evidence="3">
    <location>
        <begin position="90"/>
        <end position="103"/>
    </location>
</feature>
<feature type="compositionally biased region" description="Basic and acidic residues" evidence="3">
    <location>
        <begin position="128"/>
        <end position="140"/>
    </location>
</feature>
<feature type="compositionally biased region" description="Polar residues" evidence="3">
    <location>
        <begin position="199"/>
        <end position="211"/>
    </location>
</feature>
<feature type="compositionally biased region" description="Basic and acidic residues" evidence="3">
    <location>
        <begin position="217"/>
        <end position="228"/>
    </location>
</feature>
<feature type="compositionally biased region" description="Basic and acidic residues" evidence="3">
    <location>
        <begin position="237"/>
        <end position="248"/>
    </location>
</feature>
<feature type="compositionally biased region" description="Low complexity" evidence="3">
    <location>
        <begin position="296"/>
        <end position="305"/>
    </location>
</feature>
<feature type="compositionally biased region" description="Low complexity" evidence="3">
    <location>
        <begin position="327"/>
        <end position="340"/>
    </location>
</feature>
<feature type="compositionally biased region" description="Basic residues" evidence="3">
    <location>
        <begin position="359"/>
        <end position="373"/>
    </location>
</feature>
<feature type="compositionally biased region" description="Basic and acidic residues" evidence="3">
    <location>
        <begin position="374"/>
        <end position="383"/>
    </location>
</feature>
<reference key="1">
    <citation type="journal article" date="2008" name="PLoS Genet.">
        <title>Genomic islands in the pathogenic filamentous fungus Aspergillus fumigatus.</title>
        <authorList>
            <person name="Fedorova N.D."/>
            <person name="Khaldi N."/>
            <person name="Joardar V.S."/>
            <person name="Maiti R."/>
            <person name="Amedeo P."/>
            <person name="Anderson M.J."/>
            <person name="Crabtree J."/>
            <person name="Silva J.C."/>
            <person name="Badger J.H."/>
            <person name="Albarraq A."/>
            <person name="Angiuoli S."/>
            <person name="Bussey H."/>
            <person name="Bowyer P."/>
            <person name="Cotty P.J."/>
            <person name="Dyer P.S."/>
            <person name="Egan A."/>
            <person name="Galens K."/>
            <person name="Fraser-Liggett C.M."/>
            <person name="Haas B.J."/>
            <person name="Inman J.M."/>
            <person name="Kent R."/>
            <person name="Lemieux S."/>
            <person name="Malavazi I."/>
            <person name="Orvis J."/>
            <person name="Roemer T."/>
            <person name="Ronning C.M."/>
            <person name="Sundaram J.P."/>
            <person name="Sutton G."/>
            <person name="Turner G."/>
            <person name="Venter J.C."/>
            <person name="White O.R."/>
            <person name="Whitty B.R."/>
            <person name="Youngman P."/>
            <person name="Wolfe K.H."/>
            <person name="Goldman G.H."/>
            <person name="Wortman J.R."/>
            <person name="Jiang B."/>
            <person name="Denning D.W."/>
            <person name="Nierman W.C."/>
        </authorList>
    </citation>
    <scope>NUCLEOTIDE SEQUENCE [LARGE SCALE GENOMIC DNA]</scope>
    <source>
        <strain>ATCC 1020 / DSM 3700 / CBS 544.65 / FGSC A1164 / JCM 1740 / NRRL 181 / WB 181</strain>
    </source>
</reference>
<evidence type="ECO:0000250" key="1"/>
<evidence type="ECO:0000255" key="2">
    <source>
        <dbReference type="PROSITE-ProRule" id="PRU00077"/>
    </source>
</evidence>
<evidence type="ECO:0000256" key="3">
    <source>
        <dbReference type="SAM" id="MobiDB-lite"/>
    </source>
</evidence>
<evidence type="ECO:0000305" key="4"/>
<proteinExistence type="inferred from homology"/>
<sequence>MDDKSRGTTDAQHHATDADRPPDDGSAGLPEPGSVKSKIGLFTAQSTQKALEGERDKSATFRPRPPQQAAAQLAMQKPPVPVNKPVTLGRMNSTPELRQTEPQGSDDRAEPDLPMPKPVRNMTADADTVEKLLQDNRELPVRNPPILHRNPAMQPATSPRSPDIASVSATKPRPPPPRKGGAKPVPKSPSRSEPKIHGGQQSYEPLSNSDMDLTGADEARPKLPRRPDASPVTHIPPSDHRVLLEAHERSKRHLAPSSPLLDRSLQNNGSSPDLIDYSPGLDEEAMSDAIVASSLASRKAPSAKKFPPPPPPQRQRGTHSLLRPNTSNSDSPRSSSPASSLRHTLRPPTKIGEEEFDHHKHRKHIIHRHPHKHHEGDRKRWQSEVTEKERKRYEGVWAANKGLLIPISNSKERSSHEETSSECYPPSASEMVLNIVVRDIWARSRLPSSILEQIWNLVDRQKIGLLTREEFVVGMWLIDQQLKGHKLPVKVPDSVWDSVRGVPGIRIPKVPSR</sequence>
<accession>A1DDY6</accession>
<name>IRS4_NEOFI</name>
<protein>
    <recommendedName>
        <fullName>Increased rDNA silencing protein 4</fullName>
    </recommendedName>
</protein>
<comment type="function">
    <text evidence="1">Positive regulator of phosphatidylinositol 4,5-bisphosphate turnover and negatively regulates signaling through the cell integrity pathway. Involved in rDNA silencing (By similarity).</text>
</comment>
<comment type="similarity">
    <text evidence="4">Belongs to the IRS4 family.</text>
</comment>
<keyword id="KW-0443">Lipid metabolism</keyword>
<keyword id="KW-1185">Reference proteome</keyword>
<organism>
    <name type="scientific">Neosartorya fischeri (strain ATCC 1020 / DSM 3700 / CBS 544.65 / FGSC A1164 / JCM 1740 / NRRL 181 / WB 181)</name>
    <name type="common">Aspergillus fischerianus</name>
    <dbReference type="NCBI Taxonomy" id="331117"/>
    <lineage>
        <taxon>Eukaryota</taxon>
        <taxon>Fungi</taxon>
        <taxon>Dikarya</taxon>
        <taxon>Ascomycota</taxon>
        <taxon>Pezizomycotina</taxon>
        <taxon>Eurotiomycetes</taxon>
        <taxon>Eurotiomycetidae</taxon>
        <taxon>Eurotiales</taxon>
        <taxon>Aspergillaceae</taxon>
        <taxon>Aspergillus</taxon>
        <taxon>Aspergillus subgen. Fumigati</taxon>
    </lineage>
</organism>
<dbReference type="EMBL" id="DS027696">
    <property type="protein sequence ID" value="EAW17593.1"/>
    <property type="molecule type" value="Genomic_DNA"/>
</dbReference>
<dbReference type="RefSeq" id="XP_001259490.1">
    <property type="nucleotide sequence ID" value="XM_001259489.1"/>
</dbReference>
<dbReference type="SMR" id="A1DDY6"/>
<dbReference type="STRING" id="331117.A1DDY6"/>
<dbReference type="EnsemblFungi" id="EAW17593">
    <property type="protein sequence ID" value="EAW17593"/>
    <property type="gene ID" value="NFIA_075220"/>
</dbReference>
<dbReference type="GeneID" id="4586307"/>
<dbReference type="KEGG" id="nfi:NFIA_075220"/>
<dbReference type="VEuPathDB" id="FungiDB:NFIA_075220"/>
<dbReference type="eggNOG" id="KOG0998">
    <property type="taxonomic scope" value="Eukaryota"/>
</dbReference>
<dbReference type="HOGENOM" id="CLU_014603_1_0_1"/>
<dbReference type="OMA" id="TVDHTYP"/>
<dbReference type="OrthoDB" id="10045710at2759"/>
<dbReference type="Proteomes" id="UP000006702">
    <property type="component" value="Unassembled WGS sequence"/>
</dbReference>
<dbReference type="GO" id="GO:0005737">
    <property type="term" value="C:cytoplasm"/>
    <property type="evidence" value="ECO:0007669"/>
    <property type="project" value="TreeGrafter"/>
</dbReference>
<dbReference type="GO" id="GO:0006629">
    <property type="term" value="P:lipid metabolic process"/>
    <property type="evidence" value="ECO:0007669"/>
    <property type="project" value="UniProtKB-KW"/>
</dbReference>
<dbReference type="CDD" id="cd00052">
    <property type="entry name" value="EH"/>
    <property type="match status" value="1"/>
</dbReference>
<dbReference type="Gene3D" id="1.10.238.10">
    <property type="entry name" value="EF-hand"/>
    <property type="match status" value="1"/>
</dbReference>
<dbReference type="InterPro" id="IPR011992">
    <property type="entry name" value="EF-hand-dom_pair"/>
</dbReference>
<dbReference type="InterPro" id="IPR000261">
    <property type="entry name" value="EH_dom"/>
</dbReference>
<dbReference type="PANTHER" id="PTHR11216:SF31">
    <property type="entry name" value="AT21416P"/>
    <property type="match status" value="1"/>
</dbReference>
<dbReference type="PANTHER" id="PTHR11216">
    <property type="entry name" value="EH DOMAIN"/>
    <property type="match status" value="1"/>
</dbReference>
<dbReference type="Pfam" id="PF12763">
    <property type="entry name" value="EH"/>
    <property type="match status" value="1"/>
</dbReference>
<dbReference type="SMART" id="SM00027">
    <property type="entry name" value="EH"/>
    <property type="match status" value="1"/>
</dbReference>
<dbReference type="SUPFAM" id="SSF47473">
    <property type="entry name" value="EF-hand"/>
    <property type="match status" value="1"/>
</dbReference>
<dbReference type="PROSITE" id="PS50031">
    <property type="entry name" value="EH"/>
    <property type="match status" value="1"/>
</dbReference>